<organism>
    <name type="scientific">Archaeoglobus fulgidus (strain ATCC 49558 / DSM 4304 / JCM 9628 / NBRC 100126 / VC-16)</name>
    <dbReference type="NCBI Taxonomy" id="224325"/>
    <lineage>
        <taxon>Archaea</taxon>
        <taxon>Methanobacteriati</taxon>
        <taxon>Methanobacteriota</taxon>
        <taxon>Archaeoglobi</taxon>
        <taxon>Archaeoglobales</taxon>
        <taxon>Archaeoglobaceae</taxon>
        <taxon>Archaeoglobus</taxon>
    </lineage>
</organism>
<feature type="chain" id="PRO_0000148407" description="Dihydroorotate dehydrogenase B (NAD(+)), catalytic subunit">
    <location>
        <begin position="1"/>
        <end position="299"/>
    </location>
</feature>
<feature type="active site" description="Nucleophile">
    <location>
        <position position="128"/>
    </location>
</feature>
<feature type="binding site" evidence="1">
    <location>
        <position position="21"/>
    </location>
    <ligand>
        <name>FMN</name>
        <dbReference type="ChEBI" id="CHEBI:58210"/>
    </ligand>
</feature>
<feature type="binding site" evidence="1">
    <location>
        <begin position="44"/>
        <end position="45"/>
    </location>
    <ligand>
        <name>FMN</name>
        <dbReference type="ChEBI" id="CHEBI:58210"/>
    </ligand>
</feature>
<feature type="binding site" evidence="1">
    <location>
        <position position="44"/>
    </location>
    <ligand>
        <name>substrate</name>
    </ligand>
</feature>
<feature type="binding site" evidence="1">
    <location>
        <begin position="68"/>
        <end position="72"/>
    </location>
    <ligand>
        <name>substrate</name>
    </ligand>
</feature>
<feature type="binding site" evidence="1">
    <location>
        <position position="125"/>
    </location>
    <ligand>
        <name>FMN</name>
        <dbReference type="ChEBI" id="CHEBI:58210"/>
    </ligand>
</feature>
<feature type="binding site" evidence="1">
    <location>
        <position position="125"/>
    </location>
    <ligand>
        <name>substrate</name>
    </ligand>
</feature>
<feature type="binding site" evidence="1">
    <location>
        <position position="163"/>
    </location>
    <ligand>
        <name>FMN</name>
        <dbReference type="ChEBI" id="CHEBI:58210"/>
    </ligand>
</feature>
<feature type="binding site" evidence="1">
    <location>
        <begin position="189"/>
        <end position="190"/>
    </location>
    <ligand>
        <name>substrate</name>
    </ligand>
</feature>
<feature type="binding site" evidence="1">
    <location>
        <position position="214"/>
    </location>
    <ligand>
        <name>FMN</name>
        <dbReference type="ChEBI" id="CHEBI:58210"/>
    </ligand>
</feature>
<feature type="binding site" evidence="1">
    <location>
        <begin position="240"/>
        <end position="241"/>
    </location>
    <ligand>
        <name>FMN</name>
        <dbReference type="ChEBI" id="CHEBI:58210"/>
    </ligand>
</feature>
<feature type="binding site" evidence="1">
    <location>
        <begin position="262"/>
        <end position="263"/>
    </location>
    <ligand>
        <name>FMN</name>
        <dbReference type="ChEBI" id="CHEBI:58210"/>
    </ligand>
</feature>
<comment type="function">
    <text evidence="1">Catalyzes the conversion of dihydroorotate to orotate with NAD(+) as electron acceptor.</text>
</comment>
<comment type="catalytic activity">
    <reaction>
        <text>(S)-dihydroorotate + NAD(+) = orotate + NADH + H(+)</text>
        <dbReference type="Rhea" id="RHEA:13513"/>
        <dbReference type="ChEBI" id="CHEBI:15378"/>
        <dbReference type="ChEBI" id="CHEBI:30839"/>
        <dbReference type="ChEBI" id="CHEBI:30864"/>
        <dbReference type="ChEBI" id="CHEBI:57540"/>
        <dbReference type="ChEBI" id="CHEBI:57945"/>
        <dbReference type="EC" id="1.3.1.14"/>
    </reaction>
</comment>
<comment type="cofactor">
    <cofactor evidence="1">
        <name>FMN</name>
        <dbReference type="ChEBI" id="CHEBI:58210"/>
    </cofactor>
    <text evidence="1">Binds 1 FMN per subunit.</text>
</comment>
<comment type="pathway">
    <text>Pyrimidine metabolism; UMP biosynthesis via de novo pathway; orotate from (S)-dihydroorotate (NAD(+) route): step 1/1.</text>
</comment>
<comment type="subunit">
    <text evidence="1">Heterotetramer of 2 PyrK and 2 PyrD type B subunits.</text>
</comment>
<comment type="subcellular location">
    <subcellularLocation>
        <location evidence="1">Cytoplasm</location>
    </subcellularLocation>
</comment>
<comment type="similarity">
    <text evidence="2">Belongs to the dihydroorotate dehydrogenase family. Type 1 subfamily.</text>
</comment>
<reference key="1">
    <citation type="journal article" date="1997" name="Nature">
        <title>The complete genome sequence of the hyperthermophilic, sulphate-reducing archaeon Archaeoglobus fulgidus.</title>
        <authorList>
            <person name="Klenk H.-P."/>
            <person name="Clayton R.A."/>
            <person name="Tomb J.-F."/>
            <person name="White O."/>
            <person name="Nelson K.E."/>
            <person name="Ketchum K.A."/>
            <person name="Dodson R.J."/>
            <person name="Gwinn M.L."/>
            <person name="Hickey E.K."/>
            <person name="Peterson J.D."/>
            <person name="Richardson D.L."/>
            <person name="Kerlavage A.R."/>
            <person name="Graham D.E."/>
            <person name="Kyrpides N.C."/>
            <person name="Fleischmann R.D."/>
            <person name="Quackenbush J."/>
            <person name="Lee N.H."/>
            <person name="Sutton G.G."/>
            <person name="Gill S.R."/>
            <person name="Kirkness E.F."/>
            <person name="Dougherty B.A."/>
            <person name="McKenney K."/>
            <person name="Adams M.D."/>
            <person name="Loftus B.J."/>
            <person name="Peterson S.N."/>
            <person name="Reich C.I."/>
            <person name="McNeil L.K."/>
            <person name="Badger J.H."/>
            <person name="Glodek A."/>
            <person name="Zhou L."/>
            <person name="Overbeek R."/>
            <person name="Gocayne J.D."/>
            <person name="Weidman J.F."/>
            <person name="McDonald L.A."/>
            <person name="Utterback T.R."/>
            <person name="Cotton M.D."/>
            <person name="Spriggs T."/>
            <person name="Artiach P."/>
            <person name="Kaine B.P."/>
            <person name="Sykes S.M."/>
            <person name="Sadow P.W."/>
            <person name="D'Andrea K.P."/>
            <person name="Bowman C."/>
            <person name="Fujii C."/>
            <person name="Garland S.A."/>
            <person name="Mason T.M."/>
            <person name="Olsen G.J."/>
            <person name="Fraser C.M."/>
            <person name="Smith H.O."/>
            <person name="Woese C.R."/>
            <person name="Venter J.C."/>
        </authorList>
    </citation>
    <scope>NUCLEOTIDE SEQUENCE [LARGE SCALE GENOMIC DNA]</scope>
    <source>
        <strain>ATCC 49558 / DSM 4304 / JCM 9628 / NBRC 100126 / VC-16</strain>
    </source>
</reference>
<gene>
    <name type="primary">pyrD</name>
    <name type="ordered locus">AF_0745</name>
</gene>
<keyword id="KW-0963">Cytoplasm</keyword>
<keyword id="KW-0285">Flavoprotein</keyword>
<keyword id="KW-0288">FMN</keyword>
<keyword id="KW-0520">NAD</keyword>
<keyword id="KW-0560">Oxidoreductase</keyword>
<keyword id="KW-0665">Pyrimidine biosynthesis</keyword>
<keyword id="KW-1185">Reference proteome</keyword>
<accession>O29513</accession>
<proteinExistence type="inferred from homology"/>
<name>PYRDB_ARCFU</name>
<evidence type="ECO:0000250" key="1"/>
<evidence type="ECO:0000305" key="2"/>
<dbReference type="EC" id="1.3.1.14"/>
<dbReference type="EMBL" id="AE000782">
    <property type="protein sequence ID" value="AAB90494.1"/>
    <property type="molecule type" value="Genomic_DNA"/>
</dbReference>
<dbReference type="PIR" id="A69343">
    <property type="entry name" value="A69343"/>
</dbReference>
<dbReference type="RefSeq" id="WP_010878248.1">
    <property type="nucleotide sequence ID" value="NC_000917.1"/>
</dbReference>
<dbReference type="SMR" id="O29513"/>
<dbReference type="STRING" id="224325.AF_0745"/>
<dbReference type="PaxDb" id="224325-AF_0745"/>
<dbReference type="EnsemblBacteria" id="AAB90494">
    <property type="protein sequence ID" value="AAB90494"/>
    <property type="gene ID" value="AF_0745"/>
</dbReference>
<dbReference type="KEGG" id="afu:AF_0745"/>
<dbReference type="eggNOG" id="arCOG00603">
    <property type="taxonomic scope" value="Archaea"/>
</dbReference>
<dbReference type="HOGENOM" id="CLU_042042_0_1_2"/>
<dbReference type="OrthoDB" id="36608at2157"/>
<dbReference type="PhylomeDB" id="O29513"/>
<dbReference type="UniPathway" id="UPA00070">
    <property type="reaction ID" value="UER00945"/>
</dbReference>
<dbReference type="Proteomes" id="UP000002199">
    <property type="component" value="Chromosome"/>
</dbReference>
<dbReference type="GO" id="GO:0005737">
    <property type="term" value="C:cytoplasm"/>
    <property type="evidence" value="ECO:0007669"/>
    <property type="project" value="UniProtKB-SubCell"/>
</dbReference>
<dbReference type="GO" id="GO:0004589">
    <property type="term" value="F:dihydroorotate dehydrogenase (NAD+) activity"/>
    <property type="evidence" value="ECO:0007669"/>
    <property type="project" value="UniProtKB-EC"/>
</dbReference>
<dbReference type="GO" id="GO:0006207">
    <property type="term" value="P:'de novo' pyrimidine nucleobase biosynthetic process"/>
    <property type="evidence" value="ECO:0007669"/>
    <property type="project" value="InterPro"/>
</dbReference>
<dbReference type="GO" id="GO:0044205">
    <property type="term" value="P:'de novo' UMP biosynthetic process"/>
    <property type="evidence" value="ECO:0007669"/>
    <property type="project" value="UniProtKB-UniRule"/>
</dbReference>
<dbReference type="CDD" id="cd04740">
    <property type="entry name" value="DHOD_1B_like"/>
    <property type="match status" value="1"/>
</dbReference>
<dbReference type="FunFam" id="3.20.20.70:FF:000027">
    <property type="entry name" value="Dihydropyrimidine dehydrogenase [NADP(+)]"/>
    <property type="match status" value="1"/>
</dbReference>
<dbReference type="Gene3D" id="3.20.20.70">
    <property type="entry name" value="Aldolase class I"/>
    <property type="match status" value="1"/>
</dbReference>
<dbReference type="HAMAP" id="MF_00224">
    <property type="entry name" value="DHO_dh_type1"/>
    <property type="match status" value="1"/>
</dbReference>
<dbReference type="InterPro" id="IPR013785">
    <property type="entry name" value="Aldolase_TIM"/>
</dbReference>
<dbReference type="InterPro" id="IPR050074">
    <property type="entry name" value="DHO_dehydrogenase"/>
</dbReference>
<dbReference type="InterPro" id="IPR033888">
    <property type="entry name" value="DHOD_1B"/>
</dbReference>
<dbReference type="InterPro" id="IPR024920">
    <property type="entry name" value="Dihydroorotate_DH_1"/>
</dbReference>
<dbReference type="InterPro" id="IPR012135">
    <property type="entry name" value="Dihydroorotate_DH_1_2"/>
</dbReference>
<dbReference type="InterPro" id="IPR005720">
    <property type="entry name" value="Dihydroorotate_DH_cat"/>
</dbReference>
<dbReference type="InterPro" id="IPR001295">
    <property type="entry name" value="Dihydroorotate_DH_CS"/>
</dbReference>
<dbReference type="InterPro" id="IPR049622">
    <property type="entry name" value="Dihydroorotate_DH_I"/>
</dbReference>
<dbReference type="NCBIfam" id="NF005574">
    <property type="entry name" value="PRK07259.1"/>
    <property type="match status" value="1"/>
</dbReference>
<dbReference type="NCBIfam" id="TIGR01037">
    <property type="entry name" value="pyrD_sub1_fam"/>
    <property type="match status" value="1"/>
</dbReference>
<dbReference type="PANTHER" id="PTHR48109:SF1">
    <property type="entry name" value="DIHYDROOROTATE DEHYDROGENASE (FUMARATE)"/>
    <property type="match status" value="1"/>
</dbReference>
<dbReference type="PANTHER" id="PTHR48109">
    <property type="entry name" value="DIHYDROOROTATE DEHYDROGENASE (QUINONE), MITOCHONDRIAL-RELATED"/>
    <property type="match status" value="1"/>
</dbReference>
<dbReference type="Pfam" id="PF01180">
    <property type="entry name" value="DHO_dh"/>
    <property type="match status" value="1"/>
</dbReference>
<dbReference type="PIRSF" id="PIRSF000164">
    <property type="entry name" value="DHO_oxidase"/>
    <property type="match status" value="1"/>
</dbReference>
<dbReference type="SUPFAM" id="SSF51395">
    <property type="entry name" value="FMN-linked oxidoreductases"/>
    <property type="match status" value="1"/>
</dbReference>
<dbReference type="PROSITE" id="PS00911">
    <property type="entry name" value="DHODEHASE_1"/>
    <property type="match status" value="1"/>
</dbReference>
<dbReference type="PROSITE" id="PS00912">
    <property type="entry name" value="DHODEHASE_2"/>
    <property type="match status" value="1"/>
</dbReference>
<protein>
    <recommendedName>
        <fullName>Dihydroorotate dehydrogenase B (NAD(+)), catalytic subunit</fullName>
        <shortName>DHOD B</shortName>
        <shortName>DHODase B</shortName>
        <shortName>DHOdehase B</shortName>
        <ecNumber>1.3.1.14</ecNumber>
    </recommendedName>
    <alternativeName>
        <fullName>Dihydroorotate oxidase B</fullName>
    </alternativeName>
    <alternativeName>
        <fullName>Orotate reductase (NADH)</fullName>
    </alternativeName>
</protein>
<sequence length="299" mass="32114">MNPLETEIGGLRMKNPLMLASGIMGSKVHSLNLIARDAGAVVTKSVGVEEREGYRNPTVVNWKCGLINAVGLASPAAKDFAEELKDYTNEAPLLISLYGHSVEEFSDLVDTFDSALPYLHGYELNLSCPHVKGAGLDIGMDLELSAAIVEELKGKTKNPVFAKLSAMHDYLKLAKVLEDAGVDGITISNTLRGMKIDIMSGKPVLSNLSGGVSGPAIKPIALKCVYDLYKEIEVPIVGCGGITSFEDVLEFIMAGARAVQIGSAVYYSRRIFYSLKESLIAFTRARDCTISDLIGIAHS</sequence>